<name>DTD_SULSY</name>
<comment type="function">
    <text evidence="1">An aminoacyl-tRNA editing enzyme that deacylates mischarged D-aminoacyl-tRNAs. Also deacylates mischarged glycyl-tRNA(Ala), protecting cells against glycine mischarging by AlaRS. Acts via tRNA-based rather than protein-based catalysis; rejects L-amino acids rather than detecting D-amino acids in the active site. By recycling D-aminoacyl-tRNA to D-amino acids and free tRNA molecules, this enzyme counteracts the toxicity associated with the formation of D-aminoacyl-tRNA entities in vivo and helps enforce protein L-homochirality.</text>
</comment>
<comment type="catalytic activity">
    <reaction evidence="1">
        <text>glycyl-tRNA(Ala) + H2O = tRNA(Ala) + glycine + H(+)</text>
        <dbReference type="Rhea" id="RHEA:53744"/>
        <dbReference type="Rhea" id="RHEA-COMP:9657"/>
        <dbReference type="Rhea" id="RHEA-COMP:13640"/>
        <dbReference type="ChEBI" id="CHEBI:15377"/>
        <dbReference type="ChEBI" id="CHEBI:15378"/>
        <dbReference type="ChEBI" id="CHEBI:57305"/>
        <dbReference type="ChEBI" id="CHEBI:78442"/>
        <dbReference type="ChEBI" id="CHEBI:78522"/>
        <dbReference type="EC" id="3.1.1.96"/>
    </reaction>
</comment>
<comment type="catalytic activity">
    <reaction evidence="1">
        <text>a D-aminoacyl-tRNA + H2O = a tRNA + a D-alpha-amino acid + H(+)</text>
        <dbReference type="Rhea" id="RHEA:13953"/>
        <dbReference type="Rhea" id="RHEA-COMP:10123"/>
        <dbReference type="Rhea" id="RHEA-COMP:10124"/>
        <dbReference type="ChEBI" id="CHEBI:15377"/>
        <dbReference type="ChEBI" id="CHEBI:15378"/>
        <dbReference type="ChEBI" id="CHEBI:59871"/>
        <dbReference type="ChEBI" id="CHEBI:78442"/>
        <dbReference type="ChEBI" id="CHEBI:79333"/>
        <dbReference type="EC" id="3.1.1.96"/>
    </reaction>
</comment>
<comment type="subunit">
    <text evidence="1">Homodimer.</text>
</comment>
<comment type="subcellular location">
    <subcellularLocation>
        <location evidence="1">Cytoplasm</location>
    </subcellularLocation>
</comment>
<comment type="domain">
    <text evidence="1">A Gly-cisPro motif from one monomer fits into the active site of the other monomer to allow specific chiral rejection of L-amino acids.</text>
</comment>
<comment type="similarity">
    <text evidence="1">Belongs to the DTD family.</text>
</comment>
<protein>
    <recommendedName>
        <fullName evidence="1">D-aminoacyl-tRNA deacylase</fullName>
        <shortName evidence="1">DTD</shortName>
        <ecNumber evidence="1">3.1.1.96</ecNumber>
    </recommendedName>
    <alternativeName>
        <fullName evidence="1">Gly-tRNA(Ala) deacylase</fullName>
    </alternativeName>
</protein>
<reference key="1">
    <citation type="journal article" date="2009" name="J. Bacteriol.">
        <title>Complete and draft genome sequences of six members of the Aquificales.</title>
        <authorList>
            <person name="Reysenbach A.-L."/>
            <person name="Hamamura N."/>
            <person name="Podar M."/>
            <person name="Griffiths E."/>
            <person name="Ferreira S."/>
            <person name="Hochstein R."/>
            <person name="Heidelberg J."/>
            <person name="Johnson J."/>
            <person name="Mead D."/>
            <person name="Pohorille A."/>
            <person name="Sarmiento M."/>
            <person name="Schweighofer K."/>
            <person name="Seshadri R."/>
            <person name="Voytek M.A."/>
        </authorList>
    </citation>
    <scope>NUCLEOTIDE SEQUENCE [LARGE SCALE GENOMIC DNA]</scope>
    <source>
        <strain>YO3AOP1</strain>
    </source>
</reference>
<feature type="chain" id="PRO_1000127584" description="D-aminoacyl-tRNA deacylase">
    <location>
        <begin position="1"/>
        <end position="147"/>
    </location>
</feature>
<feature type="short sequence motif" description="Gly-cisPro motif, important for rejection of L-amino acids" evidence="1">
    <location>
        <begin position="136"/>
        <end position="137"/>
    </location>
</feature>
<sequence>MIAVVQRVTKSSVEVDGKVVGEIRKGVNILLGVAEDDTEEDINKLVNKIVYLRMFEDEDKKMNYSLLDINGEALIISQFTLLANLKKGRRPSFEYAAKPDKAKALYEKFVEEFSKYVKVQTGIFGADMKVYILNDGPVTFILDSKQL</sequence>
<organism>
    <name type="scientific">Sulfurihydrogenibium sp. (strain YO3AOP1)</name>
    <dbReference type="NCBI Taxonomy" id="436114"/>
    <lineage>
        <taxon>Bacteria</taxon>
        <taxon>Pseudomonadati</taxon>
        <taxon>Aquificota</taxon>
        <taxon>Aquificia</taxon>
        <taxon>Aquificales</taxon>
        <taxon>Hydrogenothermaceae</taxon>
        <taxon>Sulfurihydrogenibium</taxon>
    </lineage>
</organism>
<gene>
    <name evidence="1" type="primary">dtd</name>
    <name type="ordered locus">SYO3AOP1_0356</name>
</gene>
<keyword id="KW-0963">Cytoplasm</keyword>
<keyword id="KW-0378">Hydrolase</keyword>
<keyword id="KW-0694">RNA-binding</keyword>
<keyword id="KW-0820">tRNA-binding</keyword>
<dbReference type="EC" id="3.1.1.96" evidence="1"/>
<dbReference type="EMBL" id="CP001080">
    <property type="protein sequence ID" value="ACD66001.1"/>
    <property type="molecule type" value="Genomic_DNA"/>
</dbReference>
<dbReference type="RefSeq" id="WP_012459086.1">
    <property type="nucleotide sequence ID" value="NC_010730.1"/>
</dbReference>
<dbReference type="SMR" id="B2V7S8"/>
<dbReference type="STRING" id="436114.SYO3AOP1_0356"/>
<dbReference type="KEGG" id="sul:SYO3AOP1_0356"/>
<dbReference type="eggNOG" id="COG1490">
    <property type="taxonomic scope" value="Bacteria"/>
</dbReference>
<dbReference type="HOGENOM" id="CLU_076901_1_0_0"/>
<dbReference type="GO" id="GO:0005737">
    <property type="term" value="C:cytoplasm"/>
    <property type="evidence" value="ECO:0007669"/>
    <property type="project" value="UniProtKB-SubCell"/>
</dbReference>
<dbReference type="GO" id="GO:0051500">
    <property type="term" value="F:D-tyrosyl-tRNA(Tyr) deacylase activity"/>
    <property type="evidence" value="ECO:0007669"/>
    <property type="project" value="TreeGrafter"/>
</dbReference>
<dbReference type="GO" id="GO:0106026">
    <property type="term" value="F:Gly-tRNA(Ala) deacylase activity"/>
    <property type="evidence" value="ECO:0007669"/>
    <property type="project" value="UniProtKB-UniRule"/>
</dbReference>
<dbReference type="GO" id="GO:0043908">
    <property type="term" value="F:Ser(Gly)-tRNA(Ala) hydrolase activity"/>
    <property type="evidence" value="ECO:0007669"/>
    <property type="project" value="UniProtKB-UniRule"/>
</dbReference>
<dbReference type="GO" id="GO:0000049">
    <property type="term" value="F:tRNA binding"/>
    <property type="evidence" value="ECO:0007669"/>
    <property type="project" value="UniProtKB-UniRule"/>
</dbReference>
<dbReference type="GO" id="GO:0019478">
    <property type="term" value="P:D-amino acid catabolic process"/>
    <property type="evidence" value="ECO:0007669"/>
    <property type="project" value="UniProtKB-UniRule"/>
</dbReference>
<dbReference type="CDD" id="cd00563">
    <property type="entry name" value="Dtyr_deacylase"/>
    <property type="match status" value="1"/>
</dbReference>
<dbReference type="FunFam" id="3.50.80.10:FF:000001">
    <property type="entry name" value="D-aminoacyl-tRNA deacylase"/>
    <property type="match status" value="1"/>
</dbReference>
<dbReference type="Gene3D" id="3.50.80.10">
    <property type="entry name" value="D-tyrosyl-tRNA(Tyr) deacylase"/>
    <property type="match status" value="1"/>
</dbReference>
<dbReference type="HAMAP" id="MF_00518">
    <property type="entry name" value="Deacylase_Dtd"/>
    <property type="match status" value="1"/>
</dbReference>
<dbReference type="InterPro" id="IPR003732">
    <property type="entry name" value="Daa-tRNA_deacyls_DTD"/>
</dbReference>
<dbReference type="InterPro" id="IPR023509">
    <property type="entry name" value="DTD-like_sf"/>
</dbReference>
<dbReference type="NCBIfam" id="TIGR00256">
    <property type="entry name" value="D-aminoacyl-tRNA deacylase"/>
    <property type="match status" value="1"/>
</dbReference>
<dbReference type="PANTHER" id="PTHR10472:SF5">
    <property type="entry name" value="D-AMINOACYL-TRNA DEACYLASE 1"/>
    <property type="match status" value="1"/>
</dbReference>
<dbReference type="PANTHER" id="PTHR10472">
    <property type="entry name" value="D-TYROSYL-TRNA TYR DEACYLASE"/>
    <property type="match status" value="1"/>
</dbReference>
<dbReference type="Pfam" id="PF02580">
    <property type="entry name" value="Tyr_Deacylase"/>
    <property type="match status" value="1"/>
</dbReference>
<dbReference type="SUPFAM" id="SSF69500">
    <property type="entry name" value="DTD-like"/>
    <property type="match status" value="1"/>
</dbReference>
<proteinExistence type="inferred from homology"/>
<evidence type="ECO:0000255" key="1">
    <source>
        <dbReference type="HAMAP-Rule" id="MF_00518"/>
    </source>
</evidence>
<accession>B2V7S8</accession>